<proteinExistence type="inferred from homology"/>
<dbReference type="EC" id="3.5.1.5" evidence="1"/>
<dbReference type="EMBL" id="CP000875">
    <property type="protein sequence ID" value="ABX05090.1"/>
    <property type="molecule type" value="Genomic_DNA"/>
</dbReference>
<dbReference type="SMR" id="A9AZE6"/>
<dbReference type="FunCoup" id="A9AZE6">
    <property type="interactions" value="243"/>
</dbReference>
<dbReference type="STRING" id="316274.Haur_2452"/>
<dbReference type="MEROPS" id="M38.982"/>
<dbReference type="KEGG" id="hau:Haur_2452"/>
<dbReference type="eggNOG" id="COG0804">
    <property type="taxonomic scope" value="Bacteria"/>
</dbReference>
<dbReference type="HOGENOM" id="CLU_000980_0_0_0"/>
<dbReference type="InParanoid" id="A9AZE6"/>
<dbReference type="UniPathway" id="UPA00258">
    <property type="reaction ID" value="UER00370"/>
</dbReference>
<dbReference type="Proteomes" id="UP000000787">
    <property type="component" value="Chromosome"/>
</dbReference>
<dbReference type="GO" id="GO:0005737">
    <property type="term" value="C:cytoplasm"/>
    <property type="evidence" value="ECO:0007669"/>
    <property type="project" value="UniProtKB-SubCell"/>
</dbReference>
<dbReference type="GO" id="GO:0016151">
    <property type="term" value="F:nickel cation binding"/>
    <property type="evidence" value="ECO:0007669"/>
    <property type="project" value="UniProtKB-UniRule"/>
</dbReference>
<dbReference type="GO" id="GO:0009039">
    <property type="term" value="F:urease activity"/>
    <property type="evidence" value="ECO:0007669"/>
    <property type="project" value="UniProtKB-UniRule"/>
</dbReference>
<dbReference type="GO" id="GO:0043419">
    <property type="term" value="P:urea catabolic process"/>
    <property type="evidence" value="ECO:0007669"/>
    <property type="project" value="UniProtKB-UniRule"/>
</dbReference>
<dbReference type="CDD" id="cd00375">
    <property type="entry name" value="Urease_alpha"/>
    <property type="match status" value="1"/>
</dbReference>
<dbReference type="Gene3D" id="3.20.20.140">
    <property type="entry name" value="Metal-dependent hydrolases"/>
    <property type="match status" value="1"/>
</dbReference>
<dbReference type="Gene3D" id="2.30.40.10">
    <property type="entry name" value="Urease, subunit C, domain 1"/>
    <property type="match status" value="1"/>
</dbReference>
<dbReference type="HAMAP" id="MF_01953">
    <property type="entry name" value="Urease_alpha"/>
    <property type="match status" value="1"/>
</dbReference>
<dbReference type="InterPro" id="IPR006680">
    <property type="entry name" value="Amidohydro-rel"/>
</dbReference>
<dbReference type="InterPro" id="IPR011059">
    <property type="entry name" value="Metal-dep_hydrolase_composite"/>
</dbReference>
<dbReference type="InterPro" id="IPR032466">
    <property type="entry name" value="Metal_Hydrolase"/>
</dbReference>
<dbReference type="InterPro" id="IPR011612">
    <property type="entry name" value="Urease_alpha_N_dom"/>
</dbReference>
<dbReference type="InterPro" id="IPR050112">
    <property type="entry name" value="Urease_alpha_subunit"/>
</dbReference>
<dbReference type="InterPro" id="IPR017950">
    <property type="entry name" value="Urease_AS"/>
</dbReference>
<dbReference type="InterPro" id="IPR005848">
    <property type="entry name" value="Urease_asu"/>
</dbReference>
<dbReference type="InterPro" id="IPR017951">
    <property type="entry name" value="Urease_asu_c"/>
</dbReference>
<dbReference type="InterPro" id="IPR029754">
    <property type="entry name" value="Urease_Ni-bd"/>
</dbReference>
<dbReference type="NCBIfam" id="NF009685">
    <property type="entry name" value="PRK13206.1"/>
    <property type="match status" value="1"/>
</dbReference>
<dbReference type="NCBIfam" id="NF009686">
    <property type="entry name" value="PRK13207.1"/>
    <property type="match status" value="1"/>
</dbReference>
<dbReference type="NCBIfam" id="TIGR01792">
    <property type="entry name" value="urease_alph"/>
    <property type="match status" value="1"/>
</dbReference>
<dbReference type="PANTHER" id="PTHR43440">
    <property type="entry name" value="UREASE"/>
    <property type="match status" value="1"/>
</dbReference>
<dbReference type="PANTHER" id="PTHR43440:SF1">
    <property type="entry name" value="UREASE"/>
    <property type="match status" value="1"/>
</dbReference>
<dbReference type="Pfam" id="PF01979">
    <property type="entry name" value="Amidohydro_1"/>
    <property type="match status" value="1"/>
</dbReference>
<dbReference type="Pfam" id="PF00449">
    <property type="entry name" value="Urease_alpha"/>
    <property type="match status" value="1"/>
</dbReference>
<dbReference type="PRINTS" id="PR01752">
    <property type="entry name" value="UREASE"/>
</dbReference>
<dbReference type="SUPFAM" id="SSF51338">
    <property type="entry name" value="Composite domain of metallo-dependent hydrolases"/>
    <property type="match status" value="2"/>
</dbReference>
<dbReference type="SUPFAM" id="SSF51556">
    <property type="entry name" value="Metallo-dependent hydrolases"/>
    <property type="match status" value="1"/>
</dbReference>
<dbReference type="PROSITE" id="PS01120">
    <property type="entry name" value="UREASE_1"/>
    <property type="match status" value="1"/>
</dbReference>
<dbReference type="PROSITE" id="PS00145">
    <property type="entry name" value="UREASE_2"/>
    <property type="match status" value="1"/>
</dbReference>
<dbReference type="PROSITE" id="PS51368">
    <property type="entry name" value="UREASE_3"/>
    <property type="match status" value="1"/>
</dbReference>
<reference key="1">
    <citation type="journal article" date="2011" name="Stand. Genomic Sci.">
        <title>Complete genome sequence of the filamentous gliding predatory bacterium Herpetosiphon aurantiacus type strain (114-95(T)).</title>
        <authorList>
            <person name="Kiss H."/>
            <person name="Nett M."/>
            <person name="Domin N."/>
            <person name="Martin K."/>
            <person name="Maresca J.A."/>
            <person name="Copeland A."/>
            <person name="Lapidus A."/>
            <person name="Lucas S."/>
            <person name="Berry K.W."/>
            <person name="Glavina Del Rio T."/>
            <person name="Dalin E."/>
            <person name="Tice H."/>
            <person name="Pitluck S."/>
            <person name="Richardson P."/>
            <person name="Bruce D."/>
            <person name="Goodwin L."/>
            <person name="Han C."/>
            <person name="Detter J.C."/>
            <person name="Schmutz J."/>
            <person name="Brettin T."/>
            <person name="Land M."/>
            <person name="Hauser L."/>
            <person name="Kyrpides N.C."/>
            <person name="Ivanova N."/>
            <person name="Goeker M."/>
            <person name="Woyke T."/>
            <person name="Klenk H.P."/>
            <person name="Bryant D.A."/>
        </authorList>
    </citation>
    <scope>NUCLEOTIDE SEQUENCE [LARGE SCALE GENOMIC DNA]</scope>
    <source>
        <strain>ATCC 23779 / DSM 785 / 114-95</strain>
    </source>
</reference>
<gene>
    <name evidence="1" type="primary">ureC</name>
    <name type="ordered locus">Haur_2452</name>
</gene>
<organism>
    <name type="scientific">Herpetosiphon aurantiacus (strain ATCC 23779 / DSM 785 / 114-95)</name>
    <dbReference type="NCBI Taxonomy" id="316274"/>
    <lineage>
        <taxon>Bacteria</taxon>
        <taxon>Bacillati</taxon>
        <taxon>Chloroflexota</taxon>
        <taxon>Chloroflexia</taxon>
        <taxon>Herpetosiphonales</taxon>
        <taxon>Herpetosiphonaceae</taxon>
        <taxon>Herpetosiphon</taxon>
    </lineage>
</organism>
<name>URE1_HERA2</name>
<evidence type="ECO:0000255" key="1">
    <source>
        <dbReference type="HAMAP-Rule" id="MF_01953"/>
    </source>
</evidence>
<sequence length="569" mass="60668">MSLWIPRQTYADLYGPTKGDRLRLADTELIIEIEHDFAHYGDEITFGGGKVIRDGMGQSSSAHDVLDLVITNAIIIDHWGIVKGDIGIKQGRIVKVGKAGNPDTMAGVDPELVVGANTEVIAGEHMIVTAGGIDSHIHFIAPGQIPEALSNGVTTLLGGGTGPATGTKATTCTPGVWNMARMLQAADAWPVNLGFLGKGNAAQPESLIQQIQAGACGLKLHEDWGTTPAAIDMCLSVADQYDVQVAIHTDTINEAGFLEDTIRAIAGRTIHTYHTEGAGGGHAPDIIKIAGERYVLPSSTNPTRPYTVNTIAEHLDMLMVCHHLNPQVPEDVAFAESRIRPETIAAEDILHDLGVISMISSDSQAMGRVGEVVTRTWQTAHKMKVQRGALLGDSARNDNQRVKRYIAKYTINPALAHGIAHEVGSIEPGKLADLVLWQPAFFGVKPEIIVKGGLIAWNAMGDANASIPTPQPVLYRPMFGAFGGALGATSLTFVSAAAHESGIGQQLNLQKVTSAVRGCRSVQKADLIHNNATPLIEVDPETYAVRADGELLTCEPATSLPLAQRYFLF</sequence>
<protein>
    <recommendedName>
        <fullName evidence="1">Urease subunit alpha</fullName>
        <ecNumber evidence="1">3.5.1.5</ecNumber>
    </recommendedName>
    <alternativeName>
        <fullName evidence="1">Urea amidohydrolase subunit alpha</fullName>
    </alternativeName>
</protein>
<accession>A9AZE6</accession>
<feature type="chain" id="PRO_1000188877" description="Urease subunit alpha">
    <location>
        <begin position="1"/>
        <end position="569"/>
    </location>
</feature>
<feature type="domain" description="Urease" evidence="1">
    <location>
        <begin position="131"/>
        <end position="569"/>
    </location>
</feature>
<feature type="active site" description="Proton donor" evidence="1">
    <location>
        <position position="322"/>
    </location>
</feature>
<feature type="binding site" evidence="1">
    <location>
        <position position="136"/>
    </location>
    <ligand>
        <name>Ni(2+)</name>
        <dbReference type="ChEBI" id="CHEBI:49786"/>
        <label>1</label>
    </ligand>
</feature>
<feature type="binding site" evidence="1">
    <location>
        <position position="138"/>
    </location>
    <ligand>
        <name>Ni(2+)</name>
        <dbReference type="ChEBI" id="CHEBI:49786"/>
        <label>1</label>
    </ligand>
</feature>
<feature type="binding site" description="via carbamate group" evidence="1">
    <location>
        <position position="219"/>
    </location>
    <ligand>
        <name>Ni(2+)</name>
        <dbReference type="ChEBI" id="CHEBI:49786"/>
        <label>1</label>
    </ligand>
</feature>
<feature type="binding site" description="via carbamate group" evidence="1">
    <location>
        <position position="219"/>
    </location>
    <ligand>
        <name>Ni(2+)</name>
        <dbReference type="ChEBI" id="CHEBI:49786"/>
        <label>2</label>
    </ligand>
</feature>
<feature type="binding site" evidence="1">
    <location>
        <position position="221"/>
    </location>
    <ligand>
        <name>substrate</name>
    </ligand>
</feature>
<feature type="binding site" evidence="1">
    <location>
        <position position="248"/>
    </location>
    <ligand>
        <name>Ni(2+)</name>
        <dbReference type="ChEBI" id="CHEBI:49786"/>
        <label>2</label>
    </ligand>
</feature>
<feature type="binding site" evidence="1">
    <location>
        <position position="274"/>
    </location>
    <ligand>
        <name>Ni(2+)</name>
        <dbReference type="ChEBI" id="CHEBI:49786"/>
        <label>2</label>
    </ligand>
</feature>
<feature type="binding site" evidence="1">
    <location>
        <position position="362"/>
    </location>
    <ligand>
        <name>Ni(2+)</name>
        <dbReference type="ChEBI" id="CHEBI:49786"/>
        <label>1</label>
    </ligand>
</feature>
<feature type="modified residue" description="N6-carboxylysine" evidence="1">
    <location>
        <position position="219"/>
    </location>
</feature>
<comment type="catalytic activity">
    <reaction evidence="1">
        <text>urea + 2 H2O + H(+) = hydrogencarbonate + 2 NH4(+)</text>
        <dbReference type="Rhea" id="RHEA:20557"/>
        <dbReference type="ChEBI" id="CHEBI:15377"/>
        <dbReference type="ChEBI" id="CHEBI:15378"/>
        <dbReference type="ChEBI" id="CHEBI:16199"/>
        <dbReference type="ChEBI" id="CHEBI:17544"/>
        <dbReference type="ChEBI" id="CHEBI:28938"/>
        <dbReference type="EC" id="3.5.1.5"/>
    </reaction>
</comment>
<comment type="cofactor">
    <cofactor evidence="1">
        <name>Ni cation</name>
        <dbReference type="ChEBI" id="CHEBI:25516"/>
    </cofactor>
    <text evidence="1">Binds 2 nickel ions per subunit.</text>
</comment>
<comment type="pathway">
    <text evidence="1">Nitrogen metabolism; urea degradation; CO(2) and NH(3) from urea (urease route): step 1/1.</text>
</comment>
<comment type="subunit">
    <text evidence="1">Heterotrimer of UreA (gamma), UreB (beta) and UreC (alpha) subunits. Three heterotrimers associate to form the active enzyme.</text>
</comment>
<comment type="subcellular location">
    <subcellularLocation>
        <location evidence="1">Cytoplasm</location>
    </subcellularLocation>
</comment>
<comment type="PTM">
    <text evidence="1">Carboxylation allows a single lysine to coordinate two nickel ions.</text>
</comment>
<comment type="similarity">
    <text evidence="1">Belongs to the metallo-dependent hydrolases superfamily. Urease alpha subunit family.</text>
</comment>
<keyword id="KW-0963">Cytoplasm</keyword>
<keyword id="KW-0378">Hydrolase</keyword>
<keyword id="KW-0479">Metal-binding</keyword>
<keyword id="KW-0533">Nickel</keyword>